<keyword id="KW-0010">Activator</keyword>
<keyword id="KW-0025">Alternative splicing</keyword>
<keyword id="KW-0238">DNA-binding</keyword>
<keyword id="KW-1017">Isopeptide bond</keyword>
<keyword id="KW-0479">Metal-binding</keyword>
<keyword id="KW-0539">Nucleus</keyword>
<keyword id="KW-1267">Proteomics identification</keyword>
<keyword id="KW-1185">Reference proteome</keyword>
<keyword id="KW-0677">Repeat</keyword>
<keyword id="KW-0804">Transcription</keyword>
<keyword id="KW-0805">Transcription regulation</keyword>
<keyword id="KW-0832">Ubl conjugation</keyword>
<keyword id="KW-0862">Zinc</keyword>
<keyword id="KW-0863">Zinc-finger</keyword>
<organism>
    <name type="scientific">Homo sapiens</name>
    <name type="common">Human</name>
    <dbReference type="NCBI Taxonomy" id="9606"/>
    <lineage>
        <taxon>Eukaryota</taxon>
        <taxon>Metazoa</taxon>
        <taxon>Chordata</taxon>
        <taxon>Craniata</taxon>
        <taxon>Vertebrata</taxon>
        <taxon>Euteleostomi</taxon>
        <taxon>Mammalia</taxon>
        <taxon>Eutheria</taxon>
        <taxon>Euarchontoglires</taxon>
        <taxon>Primates</taxon>
        <taxon>Haplorrhini</taxon>
        <taxon>Catarrhini</taxon>
        <taxon>Hominidae</taxon>
        <taxon>Homo</taxon>
    </lineage>
</organism>
<gene>
    <name type="primary">ZNF398</name>
    <name type="synonym">KIAA1339</name>
    <name type="synonym">ZER6</name>
</gene>
<feature type="chain" id="PRO_0000047565" description="Zinc finger protein 398">
    <location>
        <begin position="1"/>
        <end position="642"/>
    </location>
</feature>
<feature type="domain" description="KRAB" evidence="2">
    <location>
        <begin position="143"/>
        <end position="214"/>
    </location>
</feature>
<feature type="zinc finger region" description="C2H2-type 1; atypical" evidence="1">
    <location>
        <begin position="343"/>
        <end position="364"/>
    </location>
</feature>
<feature type="zinc finger region" description="C2H2-type 2; degenerate" evidence="1">
    <location>
        <begin position="370"/>
        <end position="392"/>
    </location>
</feature>
<feature type="zinc finger region" description="C2H2-type 3" evidence="1">
    <location>
        <begin position="398"/>
        <end position="420"/>
    </location>
</feature>
<feature type="zinc finger region" description="C2H2-type 4" evidence="1">
    <location>
        <begin position="427"/>
        <end position="449"/>
    </location>
</feature>
<feature type="zinc finger region" description="C2H2-type 5" evidence="1">
    <location>
        <begin position="455"/>
        <end position="477"/>
    </location>
</feature>
<feature type="zinc finger region" description="C2H2-type 6" evidence="1">
    <location>
        <begin position="483"/>
        <end position="505"/>
    </location>
</feature>
<feature type="zinc finger region" description="C2H2-type 7" evidence="1">
    <location>
        <begin position="511"/>
        <end position="533"/>
    </location>
</feature>
<feature type="zinc finger region" description="C2H2-type 8" evidence="1">
    <location>
        <begin position="539"/>
        <end position="561"/>
    </location>
</feature>
<feature type="zinc finger region" description="C2H2-type 9" evidence="1">
    <location>
        <begin position="567"/>
        <end position="590"/>
    </location>
</feature>
<feature type="region of interest" description="Disordered" evidence="3">
    <location>
        <begin position="1"/>
        <end position="24"/>
    </location>
</feature>
<feature type="region of interest" description="Disordered" evidence="3">
    <location>
        <begin position="198"/>
        <end position="225"/>
    </location>
</feature>
<feature type="region of interest" description="Disordered" evidence="3">
    <location>
        <begin position="587"/>
        <end position="615"/>
    </location>
</feature>
<feature type="compositionally biased region" description="Acidic residues" evidence="3">
    <location>
        <begin position="207"/>
        <end position="220"/>
    </location>
</feature>
<feature type="cross-link" description="Glycyl lysine isopeptide (Lys-Gly) (interchain with G-Cter in SUMO2)" evidence="8">
    <location>
        <position position="265"/>
    </location>
</feature>
<feature type="splice variant" id="VSP_006926" description="In isoform 2." evidence="5 6">
    <location>
        <begin position="1"/>
        <end position="171"/>
    </location>
</feature>
<feature type="sequence variant" id="VAR_052817" description="In dbSNP:rs3801979." evidence="4">
    <original>E</original>
    <variation>D</variation>
    <location>
        <position position="87"/>
    </location>
</feature>
<feature type="sequence variant" id="VAR_052818" description="In dbSNP:rs2240370.">
    <original>S</original>
    <variation>L</variation>
    <location>
        <position position="294"/>
    </location>
</feature>
<sequence>MAEAAPAPTSEWDSECLTSLQPLPLPTPPAANEAHLQTAAISLWTVVAAVQAIERKVEIHSRRLLHLEGRTGTAEKKLASCEKTVTELGNQLEGKWAVLGTLLQEYGLLQRRLENLENLLRNRNFWILRLPPGIKGDIPKVPVAFDDVSIYFSTPEWEKLEEWQKELYKNIMKGNYESLISMDYAINQPDVLSQIQPEGEHNTEDQAGPEESEIPTDPSEEPGISTSDILSWIKQEEEPQVGAPPESKESDVYKSTYADEELVIKAEGLARSSLCPEVPVPFSSPPAAAKDAFSDVAFKSQQSTSMTPFGRPATDLPEASEGQVTFTQLGSYPLPPPVGEQVFSCHHCGKNLSQDMLLTHQCSHATEHPLPCAQCPKHFTPQADLSSTSQDHASETPPTCPHCARTFTHPSRLTYHLRVHNSTERPFPCPDCPKRFADQARLTSHRRAHASERPFRCAQCGRSFSLKISLLLHQRGHAQERPFSCPQCGIDFNGHSALIRHQMIHTGERPYPCTDCSKSFMRKEHLLNHRRLHTGERPFSCPHCGKSFIRKHHLMKHQRIHTGERPYPCSYCGRSFRYKQTLKDHLRSGHNGGCGGDSDPSGQPPNPPGPLITGLETSGLGVNTEGLETNQWYGEGSGGGVL</sequence>
<protein>
    <recommendedName>
        <fullName>Zinc finger protein 398</fullName>
    </recommendedName>
    <alternativeName>
        <fullName>Zinc finger DNA-binding protein p52/p71</fullName>
    </alternativeName>
</protein>
<dbReference type="EMBL" id="AY049744">
    <property type="protein sequence ID" value="AAK92789.1"/>
    <property type="molecule type" value="mRNA"/>
</dbReference>
<dbReference type="EMBL" id="AY049743">
    <property type="protein sequence ID" value="AAK92788.1"/>
    <property type="molecule type" value="mRNA"/>
</dbReference>
<dbReference type="EMBL" id="AK290499">
    <property type="protein sequence ID" value="BAF83188.1"/>
    <property type="molecule type" value="mRNA"/>
</dbReference>
<dbReference type="EMBL" id="AK304603">
    <property type="protein sequence ID" value="BAG65389.1"/>
    <property type="molecule type" value="mRNA"/>
</dbReference>
<dbReference type="EMBL" id="AC004890">
    <property type="status" value="NOT_ANNOTATED_CDS"/>
    <property type="molecule type" value="Genomic_DNA"/>
</dbReference>
<dbReference type="EMBL" id="CH471146">
    <property type="protein sequence ID" value="EAW80057.1"/>
    <property type="molecule type" value="Genomic_DNA"/>
</dbReference>
<dbReference type="EMBL" id="BC043295">
    <property type="protein sequence ID" value="AAH43295.1"/>
    <property type="molecule type" value="mRNA"/>
</dbReference>
<dbReference type="EMBL" id="AB037760">
    <property type="protein sequence ID" value="BAA92577.1"/>
    <property type="molecule type" value="mRNA"/>
</dbReference>
<dbReference type="CCDS" id="CCDS47739.1">
    <molecule id="Q8TD17-2"/>
</dbReference>
<dbReference type="CCDS" id="CCDS5894.1">
    <molecule id="Q8TD17-1"/>
</dbReference>
<dbReference type="RefSeq" id="NP_065832.1">
    <molecule id="Q8TD17-2"/>
    <property type="nucleotide sequence ID" value="NM_020781.4"/>
</dbReference>
<dbReference type="RefSeq" id="NP_733787.1">
    <molecule id="Q8TD17-1"/>
    <property type="nucleotide sequence ID" value="NM_170686.3"/>
</dbReference>
<dbReference type="RefSeq" id="XP_011514743.1">
    <property type="nucleotide sequence ID" value="XM_011516441.2"/>
</dbReference>
<dbReference type="SMR" id="Q8TD17"/>
<dbReference type="BioGRID" id="121600">
    <property type="interactions" value="42"/>
</dbReference>
<dbReference type="FunCoup" id="Q8TD17">
    <property type="interactions" value="2109"/>
</dbReference>
<dbReference type="IntAct" id="Q8TD17">
    <property type="interactions" value="36"/>
</dbReference>
<dbReference type="MINT" id="Q8TD17"/>
<dbReference type="STRING" id="9606.ENSP00000420418"/>
<dbReference type="GlyGen" id="Q8TD17">
    <property type="glycosylation" value="1 site"/>
</dbReference>
<dbReference type="iPTMnet" id="Q8TD17"/>
<dbReference type="PhosphoSitePlus" id="Q8TD17"/>
<dbReference type="BioMuta" id="ZNF398"/>
<dbReference type="DMDM" id="23396984"/>
<dbReference type="jPOST" id="Q8TD17"/>
<dbReference type="MassIVE" id="Q8TD17"/>
<dbReference type="PaxDb" id="9606-ENSP00000420418"/>
<dbReference type="PeptideAtlas" id="Q8TD17"/>
<dbReference type="ProteomicsDB" id="74217">
    <molecule id="Q8TD17-1"/>
</dbReference>
<dbReference type="ProteomicsDB" id="74218">
    <molecule id="Q8TD17-2"/>
</dbReference>
<dbReference type="Antibodypedia" id="18573">
    <property type="antibodies" value="162 antibodies from 22 providers"/>
</dbReference>
<dbReference type="DNASU" id="57541"/>
<dbReference type="Ensembl" id="ENST00000426851.6">
    <molecule id="Q8TD17-2"/>
    <property type="protein sequence ID" value="ENSP00000389972.2"/>
    <property type="gene ID" value="ENSG00000197024.9"/>
</dbReference>
<dbReference type="Ensembl" id="ENST00000475153.6">
    <molecule id="Q8TD17-1"/>
    <property type="protein sequence ID" value="ENSP00000420418.1"/>
    <property type="gene ID" value="ENSG00000197024.9"/>
</dbReference>
<dbReference type="Ensembl" id="ENST00000483892.5">
    <molecule id="Q8TD17-2"/>
    <property type="protein sequence ID" value="ENSP00000418564.1"/>
    <property type="gene ID" value="ENSG00000197024.9"/>
</dbReference>
<dbReference type="Ensembl" id="ENST00000491174.1">
    <molecule id="Q8TD17-2"/>
    <property type="protein sequence ID" value="ENSP00000419391.1"/>
    <property type="gene ID" value="ENSG00000197024.9"/>
</dbReference>
<dbReference type="GeneID" id="57541"/>
<dbReference type="KEGG" id="hsa:57541"/>
<dbReference type="MANE-Select" id="ENST00000475153.6">
    <property type="protein sequence ID" value="ENSP00000420418.1"/>
    <property type="RefSeq nucleotide sequence ID" value="NM_170686.3"/>
    <property type="RefSeq protein sequence ID" value="NP_733787.1"/>
</dbReference>
<dbReference type="UCSC" id="uc003wfl.4">
    <molecule id="Q8TD17-1"/>
    <property type="organism name" value="human"/>
</dbReference>
<dbReference type="AGR" id="HGNC:18373"/>
<dbReference type="CTD" id="57541"/>
<dbReference type="DisGeNET" id="57541"/>
<dbReference type="GeneCards" id="ZNF398"/>
<dbReference type="HGNC" id="HGNC:18373">
    <property type="gene designation" value="ZNF398"/>
</dbReference>
<dbReference type="HPA" id="ENSG00000197024">
    <property type="expression patterns" value="Low tissue specificity"/>
</dbReference>
<dbReference type="MIM" id="618593">
    <property type="type" value="gene"/>
</dbReference>
<dbReference type="neXtProt" id="NX_Q8TD17"/>
<dbReference type="OpenTargets" id="ENSG00000197024"/>
<dbReference type="PharmGKB" id="PA38532"/>
<dbReference type="VEuPathDB" id="HostDB:ENSG00000197024"/>
<dbReference type="eggNOG" id="KOG1721">
    <property type="taxonomic scope" value="Eukaryota"/>
</dbReference>
<dbReference type="GeneTree" id="ENSGT00940000161603"/>
<dbReference type="HOGENOM" id="CLU_002678_76_3_1"/>
<dbReference type="InParanoid" id="Q8TD17"/>
<dbReference type="OMA" id="TERAHTC"/>
<dbReference type="OrthoDB" id="654211at2759"/>
<dbReference type="PAN-GO" id="Q8TD17">
    <property type="GO annotations" value="3 GO annotations based on evolutionary models"/>
</dbReference>
<dbReference type="PhylomeDB" id="Q8TD17"/>
<dbReference type="TreeFam" id="TF337777"/>
<dbReference type="PathwayCommons" id="Q8TD17"/>
<dbReference type="Reactome" id="R-HSA-212436">
    <property type="pathway name" value="Generic Transcription Pathway"/>
</dbReference>
<dbReference type="SignaLink" id="Q8TD17"/>
<dbReference type="BioGRID-ORCS" id="57541">
    <property type="hits" value="16 hits in 1179 CRISPR screens"/>
</dbReference>
<dbReference type="CD-CODE" id="B5B9A610">
    <property type="entry name" value="PML body"/>
</dbReference>
<dbReference type="ChiTaRS" id="ZNF398">
    <property type="organism name" value="human"/>
</dbReference>
<dbReference type="GenomeRNAi" id="57541"/>
<dbReference type="Pharos" id="Q8TD17">
    <property type="development level" value="Tbio"/>
</dbReference>
<dbReference type="PRO" id="PR:Q8TD17"/>
<dbReference type="Proteomes" id="UP000005640">
    <property type="component" value="Chromosome 7"/>
</dbReference>
<dbReference type="RNAct" id="Q8TD17">
    <property type="molecule type" value="protein"/>
</dbReference>
<dbReference type="Bgee" id="ENSG00000197024">
    <property type="expression patterns" value="Expressed in buccal mucosa cell and 187 other cell types or tissues"/>
</dbReference>
<dbReference type="ExpressionAtlas" id="Q8TD17">
    <property type="expression patterns" value="baseline and differential"/>
</dbReference>
<dbReference type="GO" id="GO:0005634">
    <property type="term" value="C:nucleus"/>
    <property type="evidence" value="ECO:0000318"/>
    <property type="project" value="GO_Central"/>
</dbReference>
<dbReference type="GO" id="GO:0000981">
    <property type="term" value="F:DNA-binding transcription factor activity, RNA polymerase II-specific"/>
    <property type="evidence" value="ECO:0000318"/>
    <property type="project" value="GO_Central"/>
</dbReference>
<dbReference type="GO" id="GO:0000977">
    <property type="term" value="F:RNA polymerase II transcription regulatory region sequence-specific DNA binding"/>
    <property type="evidence" value="ECO:0000318"/>
    <property type="project" value="GO_Central"/>
</dbReference>
<dbReference type="GO" id="GO:0008270">
    <property type="term" value="F:zinc ion binding"/>
    <property type="evidence" value="ECO:0007669"/>
    <property type="project" value="UniProtKB-KW"/>
</dbReference>
<dbReference type="GO" id="GO:0045893">
    <property type="term" value="P:positive regulation of DNA-templated transcription"/>
    <property type="evidence" value="ECO:0000303"/>
    <property type="project" value="UniProtKB"/>
</dbReference>
<dbReference type="GO" id="GO:0006355">
    <property type="term" value="P:regulation of DNA-templated transcription"/>
    <property type="evidence" value="ECO:0000303"/>
    <property type="project" value="UniProtKB"/>
</dbReference>
<dbReference type="GO" id="GO:0006357">
    <property type="term" value="P:regulation of transcription by RNA polymerase II"/>
    <property type="evidence" value="ECO:0000318"/>
    <property type="project" value="GO_Central"/>
</dbReference>
<dbReference type="CDD" id="cd07765">
    <property type="entry name" value="KRAB_A-box"/>
    <property type="match status" value="1"/>
</dbReference>
<dbReference type="FunFam" id="3.30.160.60:FF:001405">
    <property type="entry name" value="Zinc finger protein 398"/>
    <property type="match status" value="1"/>
</dbReference>
<dbReference type="FunFam" id="3.30.160.60:FF:001996">
    <property type="entry name" value="Zinc finger protein 398"/>
    <property type="match status" value="1"/>
</dbReference>
<dbReference type="FunFam" id="3.30.160.60:FF:001346">
    <property type="entry name" value="zinc finger protein 398"/>
    <property type="match status" value="1"/>
</dbReference>
<dbReference type="FunFam" id="3.30.160.60:FF:000609">
    <property type="entry name" value="zinc finger protein 621"/>
    <property type="match status" value="1"/>
</dbReference>
<dbReference type="FunFam" id="3.30.160.60:FF:000410">
    <property type="entry name" value="Zinc finger protein 777"/>
    <property type="match status" value="1"/>
</dbReference>
<dbReference type="FunFam" id="3.30.160.60:FF:000617">
    <property type="entry name" value="Zinc finger protein 777"/>
    <property type="match status" value="1"/>
</dbReference>
<dbReference type="Gene3D" id="6.10.140.140">
    <property type="match status" value="1"/>
</dbReference>
<dbReference type="Gene3D" id="3.30.160.60">
    <property type="entry name" value="Classic Zinc Finger"/>
    <property type="match status" value="8"/>
</dbReference>
<dbReference type="InterPro" id="IPR003655">
    <property type="entry name" value="aKRAB"/>
</dbReference>
<dbReference type="InterPro" id="IPR001909">
    <property type="entry name" value="KRAB"/>
</dbReference>
<dbReference type="InterPro" id="IPR036051">
    <property type="entry name" value="KRAB_dom_sf"/>
</dbReference>
<dbReference type="InterPro" id="IPR036236">
    <property type="entry name" value="Znf_C2H2_sf"/>
</dbReference>
<dbReference type="InterPro" id="IPR013087">
    <property type="entry name" value="Znf_C2H2_type"/>
</dbReference>
<dbReference type="PANTHER" id="PTHR24393">
    <property type="entry name" value="ZINC FINGER PROTEIN"/>
    <property type="match status" value="1"/>
</dbReference>
<dbReference type="PANTHER" id="PTHR24393:SF153">
    <property type="entry name" value="ZINC FINGER PROTEIN 398"/>
    <property type="match status" value="1"/>
</dbReference>
<dbReference type="Pfam" id="PF01352">
    <property type="entry name" value="KRAB"/>
    <property type="match status" value="1"/>
</dbReference>
<dbReference type="Pfam" id="PF00096">
    <property type="entry name" value="zf-C2H2"/>
    <property type="match status" value="6"/>
</dbReference>
<dbReference type="Pfam" id="PF13913">
    <property type="entry name" value="zf-C2HC_2"/>
    <property type="match status" value="1"/>
</dbReference>
<dbReference type="SMART" id="SM00349">
    <property type="entry name" value="KRAB"/>
    <property type="match status" value="1"/>
</dbReference>
<dbReference type="SMART" id="SM00355">
    <property type="entry name" value="ZnF_C2H2"/>
    <property type="match status" value="8"/>
</dbReference>
<dbReference type="SUPFAM" id="SSF57667">
    <property type="entry name" value="beta-beta-alpha zinc fingers"/>
    <property type="match status" value="5"/>
</dbReference>
<dbReference type="SUPFAM" id="SSF109640">
    <property type="entry name" value="KRAB domain (Kruppel-associated box)"/>
    <property type="match status" value="1"/>
</dbReference>
<dbReference type="PROSITE" id="PS50805">
    <property type="entry name" value="KRAB"/>
    <property type="match status" value="1"/>
</dbReference>
<dbReference type="PROSITE" id="PS00028">
    <property type="entry name" value="ZINC_FINGER_C2H2_1"/>
    <property type="match status" value="7"/>
</dbReference>
<dbReference type="PROSITE" id="PS50157">
    <property type="entry name" value="ZINC_FINGER_C2H2_2"/>
    <property type="match status" value="8"/>
</dbReference>
<accession>Q8TD17</accession>
<accession>A8K384</accession>
<accession>B4E377</accession>
<accession>Q8TD18</accession>
<accession>Q9P2K7</accession>
<accession>Q9UDV8</accession>
<name>ZN398_HUMAN</name>
<reference key="1">
    <citation type="journal article" date="2002" name="J. Biol. Chem.">
        <title>A novel zinc finger transcription factor with two isoforms that are differentially repressed by estrogen receptor-alpha.</title>
        <authorList>
            <person name="Conroy A.T."/>
            <person name="Sharma M."/>
            <person name="Holtz A.E."/>
            <person name="Wu C."/>
            <person name="Sun Z."/>
            <person name="Weigel R.J."/>
        </authorList>
    </citation>
    <scope>NUCLEOTIDE SEQUENCE [MRNA] (ISOFORMS 1 AND 2)</scope>
</reference>
<reference key="2">
    <citation type="journal article" date="2004" name="Nat. Genet.">
        <title>Complete sequencing and characterization of 21,243 full-length human cDNAs.</title>
        <authorList>
            <person name="Ota T."/>
            <person name="Suzuki Y."/>
            <person name="Nishikawa T."/>
            <person name="Otsuki T."/>
            <person name="Sugiyama T."/>
            <person name="Irie R."/>
            <person name="Wakamatsu A."/>
            <person name="Hayashi K."/>
            <person name="Sato H."/>
            <person name="Nagai K."/>
            <person name="Kimura K."/>
            <person name="Makita H."/>
            <person name="Sekine M."/>
            <person name="Obayashi M."/>
            <person name="Nishi T."/>
            <person name="Shibahara T."/>
            <person name="Tanaka T."/>
            <person name="Ishii S."/>
            <person name="Yamamoto J."/>
            <person name="Saito K."/>
            <person name="Kawai Y."/>
            <person name="Isono Y."/>
            <person name="Nakamura Y."/>
            <person name="Nagahari K."/>
            <person name="Murakami K."/>
            <person name="Yasuda T."/>
            <person name="Iwayanagi T."/>
            <person name="Wagatsuma M."/>
            <person name="Shiratori A."/>
            <person name="Sudo H."/>
            <person name="Hosoiri T."/>
            <person name="Kaku Y."/>
            <person name="Kodaira H."/>
            <person name="Kondo H."/>
            <person name="Sugawara M."/>
            <person name="Takahashi M."/>
            <person name="Kanda K."/>
            <person name="Yokoi T."/>
            <person name="Furuya T."/>
            <person name="Kikkawa E."/>
            <person name="Omura Y."/>
            <person name="Abe K."/>
            <person name="Kamihara K."/>
            <person name="Katsuta N."/>
            <person name="Sato K."/>
            <person name="Tanikawa M."/>
            <person name="Yamazaki M."/>
            <person name="Ninomiya K."/>
            <person name="Ishibashi T."/>
            <person name="Yamashita H."/>
            <person name="Murakawa K."/>
            <person name="Fujimori K."/>
            <person name="Tanai H."/>
            <person name="Kimata M."/>
            <person name="Watanabe M."/>
            <person name="Hiraoka S."/>
            <person name="Chiba Y."/>
            <person name="Ishida S."/>
            <person name="Ono Y."/>
            <person name="Takiguchi S."/>
            <person name="Watanabe S."/>
            <person name="Yosida M."/>
            <person name="Hotuta T."/>
            <person name="Kusano J."/>
            <person name="Kanehori K."/>
            <person name="Takahashi-Fujii A."/>
            <person name="Hara H."/>
            <person name="Tanase T.-O."/>
            <person name="Nomura Y."/>
            <person name="Togiya S."/>
            <person name="Komai F."/>
            <person name="Hara R."/>
            <person name="Takeuchi K."/>
            <person name="Arita M."/>
            <person name="Imose N."/>
            <person name="Musashino K."/>
            <person name="Yuuki H."/>
            <person name="Oshima A."/>
            <person name="Sasaki N."/>
            <person name="Aotsuka S."/>
            <person name="Yoshikawa Y."/>
            <person name="Matsunawa H."/>
            <person name="Ichihara T."/>
            <person name="Shiohata N."/>
            <person name="Sano S."/>
            <person name="Moriya S."/>
            <person name="Momiyama H."/>
            <person name="Satoh N."/>
            <person name="Takami S."/>
            <person name="Terashima Y."/>
            <person name="Suzuki O."/>
            <person name="Nakagawa S."/>
            <person name="Senoh A."/>
            <person name="Mizoguchi H."/>
            <person name="Goto Y."/>
            <person name="Shimizu F."/>
            <person name="Wakebe H."/>
            <person name="Hishigaki H."/>
            <person name="Watanabe T."/>
            <person name="Sugiyama A."/>
            <person name="Takemoto M."/>
            <person name="Kawakami B."/>
            <person name="Yamazaki M."/>
            <person name="Watanabe K."/>
            <person name="Kumagai A."/>
            <person name="Itakura S."/>
            <person name="Fukuzumi Y."/>
            <person name="Fujimori Y."/>
            <person name="Komiyama M."/>
            <person name="Tashiro H."/>
            <person name="Tanigami A."/>
            <person name="Fujiwara T."/>
            <person name="Ono T."/>
            <person name="Yamada K."/>
            <person name="Fujii Y."/>
            <person name="Ozaki K."/>
            <person name="Hirao M."/>
            <person name="Ohmori Y."/>
            <person name="Kawabata A."/>
            <person name="Hikiji T."/>
            <person name="Kobatake N."/>
            <person name="Inagaki H."/>
            <person name="Ikema Y."/>
            <person name="Okamoto S."/>
            <person name="Okitani R."/>
            <person name="Kawakami T."/>
            <person name="Noguchi S."/>
            <person name="Itoh T."/>
            <person name="Shigeta K."/>
            <person name="Senba T."/>
            <person name="Matsumura K."/>
            <person name="Nakajima Y."/>
            <person name="Mizuno T."/>
            <person name="Morinaga M."/>
            <person name="Sasaki M."/>
            <person name="Togashi T."/>
            <person name="Oyama M."/>
            <person name="Hata H."/>
            <person name="Watanabe M."/>
            <person name="Komatsu T."/>
            <person name="Mizushima-Sugano J."/>
            <person name="Satoh T."/>
            <person name="Shirai Y."/>
            <person name="Takahashi Y."/>
            <person name="Nakagawa K."/>
            <person name="Okumura K."/>
            <person name="Nagase T."/>
            <person name="Nomura N."/>
            <person name="Kikuchi H."/>
            <person name="Masuho Y."/>
            <person name="Yamashita R."/>
            <person name="Nakai K."/>
            <person name="Yada T."/>
            <person name="Nakamura Y."/>
            <person name="Ohara O."/>
            <person name="Isogai T."/>
            <person name="Sugano S."/>
        </authorList>
    </citation>
    <scope>NUCLEOTIDE SEQUENCE [LARGE SCALE MRNA] (ISOFORMS 1 AND 2)</scope>
    <scope>VARIANT ASP-87</scope>
    <source>
        <tissue>Brain</tissue>
        <tissue>Uterus</tissue>
    </source>
</reference>
<reference key="3">
    <citation type="journal article" date="2003" name="Nature">
        <title>The DNA sequence of human chromosome 7.</title>
        <authorList>
            <person name="Hillier L.W."/>
            <person name="Fulton R.S."/>
            <person name="Fulton L.A."/>
            <person name="Graves T.A."/>
            <person name="Pepin K.H."/>
            <person name="Wagner-McPherson C."/>
            <person name="Layman D."/>
            <person name="Maas J."/>
            <person name="Jaeger S."/>
            <person name="Walker R."/>
            <person name="Wylie K."/>
            <person name="Sekhon M."/>
            <person name="Becker M.C."/>
            <person name="O'Laughlin M.D."/>
            <person name="Schaller M.E."/>
            <person name="Fewell G.A."/>
            <person name="Delehaunty K.D."/>
            <person name="Miner T.L."/>
            <person name="Nash W.E."/>
            <person name="Cordes M."/>
            <person name="Du H."/>
            <person name="Sun H."/>
            <person name="Edwards J."/>
            <person name="Bradshaw-Cordum H."/>
            <person name="Ali J."/>
            <person name="Andrews S."/>
            <person name="Isak A."/>
            <person name="Vanbrunt A."/>
            <person name="Nguyen C."/>
            <person name="Du F."/>
            <person name="Lamar B."/>
            <person name="Courtney L."/>
            <person name="Kalicki J."/>
            <person name="Ozersky P."/>
            <person name="Bielicki L."/>
            <person name="Scott K."/>
            <person name="Holmes A."/>
            <person name="Harkins R."/>
            <person name="Harris A."/>
            <person name="Strong C.M."/>
            <person name="Hou S."/>
            <person name="Tomlinson C."/>
            <person name="Dauphin-Kohlberg S."/>
            <person name="Kozlowicz-Reilly A."/>
            <person name="Leonard S."/>
            <person name="Rohlfing T."/>
            <person name="Rock S.M."/>
            <person name="Tin-Wollam A.-M."/>
            <person name="Abbott A."/>
            <person name="Minx P."/>
            <person name="Maupin R."/>
            <person name="Strowmatt C."/>
            <person name="Latreille P."/>
            <person name="Miller N."/>
            <person name="Johnson D."/>
            <person name="Murray J."/>
            <person name="Woessner J.P."/>
            <person name="Wendl M.C."/>
            <person name="Yang S.-P."/>
            <person name="Schultz B.R."/>
            <person name="Wallis J.W."/>
            <person name="Spieth J."/>
            <person name="Bieri T.A."/>
            <person name="Nelson J.O."/>
            <person name="Berkowicz N."/>
            <person name="Wohldmann P.E."/>
            <person name="Cook L.L."/>
            <person name="Hickenbotham M.T."/>
            <person name="Eldred J."/>
            <person name="Williams D."/>
            <person name="Bedell J.A."/>
            <person name="Mardis E.R."/>
            <person name="Clifton S.W."/>
            <person name="Chissoe S.L."/>
            <person name="Marra M.A."/>
            <person name="Raymond C."/>
            <person name="Haugen E."/>
            <person name="Gillett W."/>
            <person name="Zhou Y."/>
            <person name="James R."/>
            <person name="Phelps K."/>
            <person name="Iadanoto S."/>
            <person name="Bubb K."/>
            <person name="Simms E."/>
            <person name="Levy R."/>
            <person name="Clendenning J."/>
            <person name="Kaul R."/>
            <person name="Kent W.J."/>
            <person name="Furey T.S."/>
            <person name="Baertsch R.A."/>
            <person name="Brent M.R."/>
            <person name="Keibler E."/>
            <person name="Flicek P."/>
            <person name="Bork P."/>
            <person name="Suyama M."/>
            <person name="Bailey J.A."/>
            <person name="Portnoy M.E."/>
            <person name="Torrents D."/>
            <person name="Chinwalla A.T."/>
            <person name="Gish W.R."/>
            <person name="Eddy S.R."/>
            <person name="McPherson J.D."/>
            <person name="Olson M.V."/>
            <person name="Eichler E.E."/>
            <person name="Green E.D."/>
            <person name="Waterston R.H."/>
            <person name="Wilson R.K."/>
        </authorList>
    </citation>
    <scope>NUCLEOTIDE SEQUENCE [LARGE SCALE GENOMIC DNA]</scope>
</reference>
<reference key="4">
    <citation type="submission" date="2005-09" db="EMBL/GenBank/DDBJ databases">
        <authorList>
            <person name="Mural R.J."/>
            <person name="Istrail S."/>
            <person name="Sutton G.G."/>
            <person name="Florea L."/>
            <person name="Halpern A.L."/>
            <person name="Mobarry C.M."/>
            <person name="Lippert R."/>
            <person name="Walenz B."/>
            <person name="Shatkay H."/>
            <person name="Dew I."/>
            <person name="Miller J.R."/>
            <person name="Flanigan M.J."/>
            <person name="Edwards N.J."/>
            <person name="Bolanos R."/>
            <person name="Fasulo D."/>
            <person name="Halldorsson B.V."/>
            <person name="Hannenhalli S."/>
            <person name="Turner R."/>
            <person name="Yooseph S."/>
            <person name="Lu F."/>
            <person name="Nusskern D.R."/>
            <person name="Shue B.C."/>
            <person name="Zheng X.H."/>
            <person name="Zhong F."/>
            <person name="Delcher A.L."/>
            <person name="Huson D.H."/>
            <person name="Kravitz S.A."/>
            <person name="Mouchard L."/>
            <person name="Reinert K."/>
            <person name="Remington K.A."/>
            <person name="Clark A.G."/>
            <person name="Waterman M.S."/>
            <person name="Eichler E.E."/>
            <person name="Adams M.D."/>
            <person name="Hunkapiller M.W."/>
            <person name="Myers E.W."/>
            <person name="Venter J.C."/>
        </authorList>
    </citation>
    <scope>NUCLEOTIDE SEQUENCE [LARGE SCALE GENOMIC DNA]</scope>
</reference>
<reference key="5">
    <citation type="journal article" date="2004" name="Genome Res.">
        <title>The status, quality, and expansion of the NIH full-length cDNA project: the Mammalian Gene Collection (MGC).</title>
        <authorList>
            <consortium name="The MGC Project Team"/>
        </authorList>
    </citation>
    <scope>NUCLEOTIDE SEQUENCE [LARGE SCALE MRNA] (ISOFORM 1)</scope>
    <source>
        <tissue>Testis</tissue>
    </source>
</reference>
<reference key="6">
    <citation type="journal article" date="2000" name="DNA Res.">
        <title>Prediction of the coding sequences of unidentified human genes. XVI. The complete sequences of 150 new cDNA clones from brain which code for large proteins in vitro.</title>
        <authorList>
            <person name="Nagase T."/>
            <person name="Kikuno R."/>
            <person name="Ishikawa K."/>
            <person name="Hirosawa M."/>
            <person name="Ohara O."/>
        </authorList>
    </citation>
    <scope>NUCLEOTIDE SEQUENCE [LARGE SCALE MRNA] OF 234-642</scope>
    <source>
        <tissue>Brain</tissue>
    </source>
</reference>
<reference key="7">
    <citation type="journal article" date="2017" name="Nat. Struct. Mol. Biol.">
        <title>Site-specific mapping of the human SUMO proteome reveals co-modification with phosphorylation.</title>
        <authorList>
            <person name="Hendriks I.A."/>
            <person name="Lyon D."/>
            <person name="Young C."/>
            <person name="Jensen L.J."/>
            <person name="Vertegaal A.C."/>
            <person name="Nielsen M.L."/>
        </authorList>
    </citation>
    <scope>SUMOYLATION [LARGE SCALE ANALYSIS] AT LYS-265</scope>
    <scope>IDENTIFICATION BY MASS SPECTROMETRY [LARGE SCALE ANALYSIS]</scope>
</reference>
<proteinExistence type="evidence at protein level"/>
<comment type="function">
    <text>Functions as a transcriptional activator.</text>
</comment>
<comment type="interaction">
    <interactant intactId="EBI-8643207">
        <id>Q8TD17</id>
    </interactant>
    <interactant intactId="EBI-8643161">
        <id>Q9NX04</id>
        <label>AIRIM</label>
    </interactant>
    <organismsDiffer>false</organismsDiffer>
    <experiments>4</experiments>
</comment>
<comment type="interaction">
    <interactant intactId="EBI-8643207">
        <id>Q8TD17</id>
    </interactant>
    <interactant intactId="EBI-745213">
        <id>P29972</id>
        <label>AQP1</label>
    </interactant>
    <organismsDiffer>false</organismsDiffer>
    <experiments>3</experiments>
</comment>
<comment type="interaction">
    <interactant intactId="EBI-8643207">
        <id>Q8TD17</id>
    </interactant>
    <interactant intactId="EBI-10311131">
        <id>Q9NP86</id>
        <label>CABP5</label>
    </interactant>
    <organismsDiffer>false</organismsDiffer>
    <experiments>3</experiments>
</comment>
<comment type="interaction">
    <interactant intactId="EBI-8643207">
        <id>Q8TD17</id>
    </interactant>
    <interactant intactId="EBI-11985957">
        <id>O14647-3</id>
        <label>CHD2</label>
    </interactant>
    <organismsDiffer>false</organismsDiffer>
    <experiments>3</experiments>
</comment>
<comment type="interaction">
    <interactant intactId="EBI-8643207">
        <id>Q8TD17</id>
    </interactant>
    <interactant intactId="EBI-10292696">
        <id>Q96Q77</id>
        <label>CIB3</label>
    </interactant>
    <organismsDiffer>false</organismsDiffer>
    <experiments>6</experiments>
</comment>
<comment type="interaction">
    <interactant intactId="EBI-8643207">
        <id>Q8TD17</id>
    </interactant>
    <interactant intactId="EBI-750020">
        <id>P49760</id>
        <label>CLK2</label>
    </interactant>
    <organismsDiffer>false</organismsDiffer>
    <experiments>6</experiments>
</comment>
<comment type="interaction">
    <interactant intactId="EBI-8643207">
        <id>Q8TD17</id>
    </interactant>
    <interactant intactId="EBI-346417">
        <id>Q92556</id>
        <label>ELMO1</label>
    </interactant>
    <organismsDiffer>false</organismsDiffer>
    <experiments>6</experiments>
</comment>
<comment type="interaction">
    <interactant intactId="EBI-8643207">
        <id>Q8TD17</id>
    </interactant>
    <interactant intactId="EBI-489887">
        <id>P50402</id>
        <label>EMD</label>
    </interactant>
    <organismsDiffer>false</organismsDiffer>
    <experiments>3</experiments>
</comment>
<comment type="interaction">
    <interactant intactId="EBI-8643207">
        <id>Q8TD17</id>
    </interactant>
    <interactant intactId="EBI-5666657">
        <id>Q9NWQ4</id>
        <label>GPATCH2L</label>
    </interactant>
    <organismsDiffer>false</organismsDiffer>
    <experiments>5</experiments>
</comment>
<comment type="interaction">
    <interactant intactId="EBI-8643207">
        <id>Q8TD17</id>
    </interactant>
    <interactant intactId="EBI-746778">
        <id>Q96A72</id>
        <label>MAGOHB</label>
    </interactant>
    <organismsDiffer>false</organismsDiffer>
    <experiments>6</experiments>
</comment>
<comment type="interaction">
    <interactant intactId="EBI-8643207">
        <id>Q8TD17</id>
    </interactant>
    <interactant intactId="EBI-1048159">
        <id>P55081</id>
        <label>MFAP1</label>
    </interactant>
    <organismsDiffer>false</organismsDiffer>
    <experiments>7</experiments>
</comment>
<comment type="interaction">
    <interactant intactId="EBI-8643207">
        <id>Q8TD17</id>
    </interactant>
    <interactant intactId="EBI-1053490">
        <id>Q9UBB6</id>
        <label>NCDN</label>
    </interactant>
    <organismsDiffer>false</organismsDiffer>
    <experiments>3</experiments>
</comment>
<comment type="interaction">
    <interactant intactId="EBI-8643207">
        <id>Q8TD17</id>
    </interactant>
    <interactant intactId="EBI-10297093">
        <id>Q9BRQ3</id>
        <label>NUDT22</label>
    </interactant>
    <organismsDiffer>false</organismsDiffer>
    <experiments>3</experiments>
</comment>
<comment type="interaction">
    <interactant intactId="EBI-8643207">
        <id>Q8TD17</id>
    </interactant>
    <interactant intactId="EBI-748974">
        <id>Q96CV9</id>
        <label>OPTN</label>
    </interactant>
    <organismsDiffer>false</organismsDiffer>
    <experiments>3</experiments>
</comment>
<comment type="interaction">
    <interactant intactId="EBI-8643207">
        <id>Q8TD17</id>
    </interactant>
    <interactant intactId="EBI-742388">
        <id>Q9H8W4</id>
        <label>PLEKHF2</label>
    </interactant>
    <organismsDiffer>false</organismsDiffer>
    <experiments>3</experiments>
</comment>
<comment type="interaction">
    <interactant intactId="EBI-8643207">
        <id>Q8TD17</id>
    </interactant>
    <interactant intactId="EBI-725997">
        <id>Q8WV44</id>
        <label>TRIM41</label>
    </interactant>
    <organismsDiffer>false</organismsDiffer>
    <experiments>3</experiments>
</comment>
<comment type="interaction">
    <interactant intactId="EBI-8643207">
        <id>Q8TD17</id>
    </interactant>
    <interactant intactId="EBI-2371670">
        <id>Q9UDV7</id>
        <label>ZNF282</label>
    </interactant>
    <organismsDiffer>false</organismsDiffer>
    <experiments>5</experiments>
</comment>
<comment type="interaction">
    <interactant intactId="EBI-8643207">
        <id>Q8TD17</id>
    </interactant>
    <interactant intactId="EBI-10254978">
        <id>Q6ZMS7</id>
        <label>ZNF783</label>
    </interactant>
    <organismsDiffer>false</organismsDiffer>
    <experiments>5</experiments>
</comment>
<comment type="interaction">
    <interactant intactId="EBI-8643207">
        <id>Q8TD17</id>
    </interactant>
    <interactant intactId="EBI-17789949">
        <id>Q6ZMS7-2</id>
        <label>ZNF783</label>
    </interactant>
    <organismsDiffer>false</organismsDiffer>
    <experiments>3</experiments>
</comment>
<comment type="subcellular location">
    <subcellularLocation>
        <location evidence="7">Nucleus</location>
    </subcellularLocation>
</comment>
<comment type="alternative products">
    <event type="alternative splicing"/>
    <isoform>
        <id>Q8TD17-1</id>
        <name>1</name>
        <name>p71</name>
        <sequence type="displayed"/>
    </isoform>
    <isoform>
        <id>Q8TD17-2</id>
        <name>2</name>
        <name>p52</name>
        <sequence type="described" ref="VSP_006926"/>
    </isoform>
</comment>
<comment type="induction">
    <text>By estrogen receptor alpha.</text>
</comment>
<comment type="similarity">
    <text evidence="7">Belongs to the krueppel C2H2-type zinc-finger protein family.</text>
</comment>
<evidence type="ECO:0000255" key="1">
    <source>
        <dbReference type="PROSITE-ProRule" id="PRU00042"/>
    </source>
</evidence>
<evidence type="ECO:0000255" key="2">
    <source>
        <dbReference type="PROSITE-ProRule" id="PRU00119"/>
    </source>
</evidence>
<evidence type="ECO:0000256" key="3">
    <source>
        <dbReference type="SAM" id="MobiDB-lite"/>
    </source>
</evidence>
<evidence type="ECO:0000269" key="4">
    <source>
    </source>
</evidence>
<evidence type="ECO:0000303" key="5">
    <source>
    </source>
</evidence>
<evidence type="ECO:0000303" key="6">
    <source>
    </source>
</evidence>
<evidence type="ECO:0000305" key="7"/>
<evidence type="ECO:0007744" key="8">
    <source>
    </source>
</evidence>